<name>AROA_SHIB3</name>
<accession>B2TUH3</accession>
<gene>
    <name evidence="1" type="primary">aroA</name>
    <name type="ordered locus">SbBS512_E2420</name>
</gene>
<organism>
    <name type="scientific">Shigella boydii serotype 18 (strain CDC 3083-94 / BS512)</name>
    <dbReference type="NCBI Taxonomy" id="344609"/>
    <lineage>
        <taxon>Bacteria</taxon>
        <taxon>Pseudomonadati</taxon>
        <taxon>Pseudomonadota</taxon>
        <taxon>Gammaproteobacteria</taxon>
        <taxon>Enterobacterales</taxon>
        <taxon>Enterobacteriaceae</taxon>
        <taxon>Shigella</taxon>
    </lineage>
</organism>
<dbReference type="EC" id="2.5.1.19" evidence="1"/>
<dbReference type="EMBL" id="CP001063">
    <property type="protein sequence ID" value="ACD09836.1"/>
    <property type="molecule type" value="Genomic_DNA"/>
</dbReference>
<dbReference type="RefSeq" id="WP_000445231.1">
    <property type="nucleotide sequence ID" value="NC_010658.1"/>
</dbReference>
<dbReference type="SMR" id="B2TUH3"/>
<dbReference type="STRING" id="344609.SbBS512_E2420"/>
<dbReference type="GeneID" id="93776510"/>
<dbReference type="KEGG" id="sbc:SbBS512_E2420"/>
<dbReference type="HOGENOM" id="CLU_024321_0_0_6"/>
<dbReference type="UniPathway" id="UPA00053">
    <property type="reaction ID" value="UER00089"/>
</dbReference>
<dbReference type="Proteomes" id="UP000001030">
    <property type="component" value="Chromosome"/>
</dbReference>
<dbReference type="GO" id="GO:0005737">
    <property type="term" value="C:cytoplasm"/>
    <property type="evidence" value="ECO:0007669"/>
    <property type="project" value="UniProtKB-SubCell"/>
</dbReference>
<dbReference type="GO" id="GO:0003866">
    <property type="term" value="F:3-phosphoshikimate 1-carboxyvinyltransferase activity"/>
    <property type="evidence" value="ECO:0007669"/>
    <property type="project" value="UniProtKB-UniRule"/>
</dbReference>
<dbReference type="GO" id="GO:0008652">
    <property type="term" value="P:amino acid biosynthetic process"/>
    <property type="evidence" value="ECO:0007669"/>
    <property type="project" value="UniProtKB-KW"/>
</dbReference>
<dbReference type="GO" id="GO:0009073">
    <property type="term" value="P:aromatic amino acid family biosynthetic process"/>
    <property type="evidence" value="ECO:0007669"/>
    <property type="project" value="UniProtKB-KW"/>
</dbReference>
<dbReference type="GO" id="GO:0009423">
    <property type="term" value="P:chorismate biosynthetic process"/>
    <property type="evidence" value="ECO:0007669"/>
    <property type="project" value="UniProtKB-UniRule"/>
</dbReference>
<dbReference type="CDD" id="cd01554">
    <property type="entry name" value="EPT-like"/>
    <property type="match status" value="1"/>
</dbReference>
<dbReference type="FunFam" id="3.65.10.10:FF:000003">
    <property type="entry name" value="3-phosphoshikimate 1-carboxyvinyltransferase"/>
    <property type="match status" value="1"/>
</dbReference>
<dbReference type="FunFam" id="3.65.10.10:FF:000004">
    <property type="entry name" value="3-phosphoshikimate 1-carboxyvinyltransferase"/>
    <property type="match status" value="1"/>
</dbReference>
<dbReference type="Gene3D" id="3.65.10.10">
    <property type="entry name" value="Enolpyruvate transferase domain"/>
    <property type="match status" value="2"/>
</dbReference>
<dbReference type="HAMAP" id="MF_00210">
    <property type="entry name" value="EPSP_synth"/>
    <property type="match status" value="1"/>
</dbReference>
<dbReference type="InterPro" id="IPR001986">
    <property type="entry name" value="Enolpyruvate_Tfrase_dom"/>
</dbReference>
<dbReference type="InterPro" id="IPR036968">
    <property type="entry name" value="Enolpyruvate_Tfrase_sf"/>
</dbReference>
<dbReference type="InterPro" id="IPR006264">
    <property type="entry name" value="EPSP_synthase"/>
</dbReference>
<dbReference type="InterPro" id="IPR023193">
    <property type="entry name" value="EPSP_synthase_CS"/>
</dbReference>
<dbReference type="InterPro" id="IPR013792">
    <property type="entry name" value="RNA3'P_cycl/enolpyr_Trfase_a/b"/>
</dbReference>
<dbReference type="NCBIfam" id="TIGR01356">
    <property type="entry name" value="aroA"/>
    <property type="match status" value="1"/>
</dbReference>
<dbReference type="PANTHER" id="PTHR21090">
    <property type="entry name" value="AROM/DEHYDROQUINATE SYNTHASE"/>
    <property type="match status" value="1"/>
</dbReference>
<dbReference type="PANTHER" id="PTHR21090:SF5">
    <property type="entry name" value="PENTAFUNCTIONAL AROM POLYPEPTIDE"/>
    <property type="match status" value="1"/>
</dbReference>
<dbReference type="Pfam" id="PF00275">
    <property type="entry name" value="EPSP_synthase"/>
    <property type="match status" value="1"/>
</dbReference>
<dbReference type="PIRSF" id="PIRSF000505">
    <property type="entry name" value="EPSPS"/>
    <property type="match status" value="1"/>
</dbReference>
<dbReference type="SUPFAM" id="SSF55205">
    <property type="entry name" value="EPT/RTPC-like"/>
    <property type="match status" value="1"/>
</dbReference>
<dbReference type="PROSITE" id="PS00104">
    <property type="entry name" value="EPSP_SYNTHASE_1"/>
    <property type="match status" value="1"/>
</dbReference>
<dbReference type="PROSITE" id="PS00885">
    <property type="entry name" value="EPSP_SYNTHASE_2"/>
    <property type="match status" value="1"/>
</dbReference>
<evidence type="ECO:0000255" key="1">
    <source>
        <dbReference type="HAMAP-Rule" id="MF_00210"/>
    </source>
</evidence>
<sequence length="427" mass="46096">MESLTLQPIARVDGTINLPGSKSVSNRALLLAALAHGKTVLTNLLDSDDVRHMLNALTALGVSYTLSADRTRCEIIGNGGPLHAEGALELFLGNAGTAMRPLAAALCLGSNDIVLTGEPRMKERPIGHLVDALRLGGAKITYLEQENYPPLRLQGGFTGGNVDVDGSVSSQFLTALLMTAPLAPEDTVIRIKGDLVSKPYIDITLNLMKTFGVEIENQHYQQFVVKGGQSYQSPGTYLVEGDASSASYFLAAAAIKGGTVKVTGIGRNSMQGDIRFADVLEKMGATICWGDDYISCTRGELNAIDMDMNHIPDAAMTIATAALFAKGTTTLRNIYNWRVKETDRLFAMATELRKVGAEVEEGHDYIRITPPEKLNFAEIATYNDHRMAMCFSLVALSDTPVTILDPKCTAKTFPDYFEQLARISQAA</sequence>
<proteinExistence type="inferred from homology"/>
<keyword id="KW-0028">Amino-acid biosynthesis</keyword>
<keyword id="KW-0057">Aromatic amino acid biosynthesis</keyword>
<keyword id="KW-0963">Cytoplasm</keyword>
<keyword id="KW-1185">Reference proteome</keyword>
<keyword id="KW-0808">Transferase</keyword>
<reference key="1">
    <citation type="submission" date="2008-05" db="EMBL/GenBank/DDBJ databases">
        <title>Complete sequence of Shigella boydii serotype 18 strain BS512.</title>
        <authorList>
            <person name="Rasko D.A."/>
            <person name="Rosovitz M."/>
            <person name="Maurelli A.T."/>
            <person name="Myers G."/>
            <person name="Seshadri R."/>
            <person name="Cer R."/>
            <person name="Jiang L."/>
            <person name="Ravel J."/>
            <person name="Sebastian Y."/>
        </authorList>
    </citation>
    <scope>NUCLEOTIDE SEQUENCE [LARGE SCALE GENOMIC DNA]</scope>
    <source>
        <strain>CDC 3083-94 / BS512</strain>
    </source>
</reference>
<feature type="chain" id="PRO_1000099753" description="3-phosphoshikimate 1-carboxyvinyltransferase">
    <location>
        <begin position="1"/>
        <end position="427"/>
    </location>
</feature>
<feature type="active site" description="Proton acceptor" evidence="1">
    <location>
        <position position="313"/>
    </location>
</feature>
<feature type="binding site" evidence="1">
    <location>
        <position position="22"/>
    </location>
    <ligand>
        <name>3-phosphoshikimate</name>
        <dbReference type="ChEBI" id="CHEBI:145989"/>
    </ligand>
</feature>
<feature type="binding site" evidence="1">
    <location>
        <position position="22"/>
    </location>
    <ligand>
        <name>phosphoenolpyruvate</name>
        <dbReference type="ChEBI" id="CHEBI:58702"/>
    </ligand>
</feature>
<feature type="binding site" evidence="1">
    <location>
        <position position="23"/>
    </location>
    <ligand>
        <name>3-phosphoshikimate</name>
        <dbReference type="ChEBI" id="CHEBI:145989"/>
    </ligand>
</feature>
<feature type="binding site" evidence="1">
    <location>
        <position position="27"/>
    </location>
    <ligand>
        <name>3-phosphoshikimate</name>
        <dbReference type="ChEBI" id="CHEBI:145989"/>
    </ligand>
</feature>
<feature type="binding site" evidence="1">
    <location>
        <position position="96"/>
    </location>
    <ligand>
        <name>phosphoenolpyruvate</name>
        <dbReference type="ChEBI" id="CHEBI:58702"/>
    </ligand>
</feature>
<feature type="binding site" evidence="1">
    <location>
        <position position="124"/>
    </location>
    <ligand>
        <name>phosphoenolpyruvate</name>
        <dbReference type="ChEBI" id="CHEBI:58702"/>
    </ligand>
</feature>
<feature type="binding site" evidence="1">
    <location>
        <position position="169"/>
    </location>
    <ligand>
        <name>3-phosphoshikimate</name>
        <dbReference type="ChEBI" id="CHEBI:145989"/>
    </ligand>
</feature>
<feature type="binding site" evidence="1">
    <location>
        <position position="170"/>
    </location>
    <ligand>
        <name>3-phosphoshikimate</name>
        <dbReference type="ChEBI" id="CHEBI:145989"/>
    </ligand>
</feature>
<feature type="binding site" evidence="1">
    <location>
        <position position="171"/>
    </location>
    <ligand>
        <name>3-phosphoshikimate</name>
        <dbReference type="ChEBI" id="CHEBI:145989"/>
    </ligand>
</feature>
<feature type="binding site" evidence="1">
    <location>
        <position position="171"/>
    </location>
    <ligand>
        <name>phosphoenolpyruvate</name>
        <dbReference type="ChEBI" id="CHEBI:58702"/>
    </ligand>
</feature>
<feature type="binding site" evidence="1">
    <location>
        <position position="197"/>
    </location>
    <ligand>
        <name>3-phosphoshikimate</name>
        <dbReference type="ChEBI" id="CHEBI:145989"/>
    </ligand>
</feature>
<feature type="binding site" evidence="1">
    <location>
        <position position="313"/>
    </location>
    <ligand>
        <name>3-phosphoshikimate</name>
        <dbReference type="ChEBI" id="CHEBI:145989"/>
    </ligand>
</feature>
<feature type="binding site" evidence="1">
    <location>
        <position position="336"/>
    </location>
    <ligand>
        <name>3-phosphoshikimate</name>
        <dbReference type="ChEBI" id="CHEBI:145989"/>
    </ligand>
</feature>
<feature type="binding site" evidence="1">
    <location>
        <position position="340"/>
    </location>
    <ligand>
        <name>3-phosphoshikimate</name>
        <dbReference type="ChEBI" id="CHEBI:145989"/>
    </ligand>
</feature>
<feature type="binding site" evidence="1">
    <location>
        <position position="344"/>
    </location>
    <ligand>
        <name>phosphoenolpyruvate</name>
        <dbReference type="ChEBI" id="CHEBI:58702"/>
    </ligand>
</feature>
<feature type="binding site" evidence="1">
    <location>
        <position position="386"/>
    </location>
    <ligand>
        <name>phosphoenolpyruvate</name>
        <dbReference type="ChEBI" id="CHEBI:58702"/>
    </ligand>
</feature>
<feature type="binding site" evidence="1">
    <location>
        <position position="411"/>
    </location>
    <ligand>
        <name>phosphoenolpyruvate</name>
        <dbReference type="ChEBI" id="CHEBI:58702"/>
    </ligand>
</feature>
<comment type="function">
    <text evidence="1">Catalyzes the transfer of the enolpyruvyl moiety of phosphoenolpyruvate (PEP) to the 5-hydroxyl of shikimate-3-phosphate (S3P) to produce enolpyruvyl shikimate-3-phosphate and inorganic phosphate.</text>
</comment>
<comment type="catalytic activity">
    <reaction evidence="1">
        <text>3-phosphoshikimate + phosphoenolpyruvate = 5-O-(1-carboxyvinyl)-3-phosphoshikimate + phosphate</text>
        <dbReference type="Rhea" id="RHEA:21256"/>
        <dbReference type="ChEBI" id="CHEBI:43474"/>
        <dbReference type="ChEBI" id="CHEBI:57701"/>
        <dbReference type="ChEBI" id="CHEBI:58702"/>
        <dbReference type="ChEBI" id="CHEBI:145989"/>
        <dbReference type="EC" id="2.5.1.19"/>
    </reaction>
    <physiologicalReaction direction="left-to-right" evidence="1">
        <dbReference type="Rhea" id="RHEA:21257"/>
    </physiologicalReaction>
</comment>
<comment type="pathway">
    <text evidence="1">Metabolic intermediate biosynthesis; chorismate biosynthesis; chorismate from D-erythrose 4-phosphate and phosphoenolpyruvate: step 6/7.</text>
</comment>
<comment type="subunit">
    <text evidence="1">Monomer.</text>
</comment>
<comment type="subcellular location">
    <subcellularLocation>
        <location evidence="1">Cytoplasm</location>
    </subcellularLocation>
</comment>
<comment type="similarity">
    <text evidence="1">Belongs to the EPSP synthase family.</text>
</comment>
<protein>
    <recommendedName>
        <fullName evidence="1">3-phosphoshikimate 1-carboxyvinyltransferase</fullName>
        <ecNumber evidence="1">2.5.1.19</ecNumber>
    </recommendedName>
    <alternativeName>
        <fullName evidence="1">5-enolpyruvylshikimate-3-phosphate synthase</fullName>
        <shortName evidence="1">EPSP synthase</shortName>
        <shortName evidence="1">EPSPS</shortName>
    </alternativeName>
</protein>